<keyword id="KW-0131">Cell cycle</keyword>
<keyword id="KW-0132">Cell division</keyword>
<keyword id="KW-0963">Cytoplasm</keyword>
<keyword id="KW-0227">DNA damage</keyword>
<keyword id="KW-0498">Mitosis</keyword>
<keyword id="KW-0539">Nucleus</keyword>
<keyword id="KW-0597">Phosphoprotein</keyword>
<keyword id="KW-1185">Reference proteome</keyword>
<feature type="chain" id="PRO_0000305254" description="TIMELESS-interacting protein">
    <location>
        <begin position="1"/>
        <end position="278"/>
    </location>
</feature>
<feature type="region of interest" description="Disordered" evidence="3">
    <location>
        <begin position="1"/>
        <end position="59"/>
    </location>
</feature>
<feature type="region of interest" description="Interaction with TIMELESS" evidence="2">
    <location>
        <begin position="64"/>
        <end position="140"/>
    </location>
</feature>
<feature type="region of interest" description="Disordered" evidence="3">
    <location>
        <begin position="155"/>
        <end position="197"/>
    </location>
</feature>
<feature type="region of interest" description="Disordered" evidence="3">
    <location>
        <begin position="216"/>
        <end position="278"/>
    </location>
</feature>
<feature type="compositionally biased region" description="Acidic residues" evidence="3">
    <location>
        <begin position="226"/>
        <end position="239"/>
    </location>
</feature>
<feature type="compositionally biased region" description="Basic and acidic residues" evidence="3">
    <location>
        <begin position="259"/>
        <end position="278"/>
    </location>
</feature>
<feature type="modified residue" description="Phosphoserine" evidence="2">
    <location>
        <position position="191"/>
    </location>
</feature>
<feature type="modified residue" description="Phosphoserine" evidence="2">
    <location>
        <position position="219"/>
    </location>
</feature>
<feature type="modified residue" description="Phosphothreonine" evidence="2">
    <location>
        <position position="233"/>
    </location>
</feature>
<feature type="sequence conflict" description="In Ref. 1; BAB22798." evidence="6" ref="1">
    <original>T</original>
    <variation>A</variation>
    <location>
        <position position="67"/>
    </location>
</feature>
<feature type="sequence conflict" description="In Ref. 2; AAH16211." evidence="6" ref="2">
    <original>C</original>
    <variation>F</variation>
    <location>
        <position position="265"/>
    </location>
</feature>
<reference key="1">
    <citation type="journal article" date="2005" name="Science">
        <title>The transcriptional landscape of the mammalian genome.</title>
        <authorList>
            <person name="Carninci P."/>
            <person name="Kasukawa T."/>
            <person name="Katayama S."/>
            <person name="Gough J."/>
            <person name="Frith M.C."/>
            <person name="Maeda N."/>
            <person name="Oyama R."/>
            <person name="Ravasi T."/>
            <person name="Lenhard B."/>
            <person name="Wells C."/>
            <person name="Kodzius R."/>
            <person name="Shimokawa K."/>
            <person name="Bajic V.B."/>
            <person name="Brenner S.E."/>
            <person name="Batalov S."/>
            <person name="Forrest A.R."/>
            <person name="Zavolan M."/>
            <person name="Davis M.J."/>
            <person name="Wilming L.G."/>
            <person name="Aidinis V."/>
            <person name="Allen J.E."/>
            <person name="Ambesi-Impiombato A."/>
            <person name="Apweiler R."/>
            <person name="Aturaliya R.N."/>
            <person name="Bailey T.L."/>
            <person name="Bansal M."/>
            <person name="Baxter L."/>
            <person name="Beisel K.W."/>
            <person name="Bersano T."/>
            <person name="Bono H."/>
            <person name="Chalk A.M."/>
            <person name="Chiu K.P."/>
            <person name="Choudhary V."/>
            <person name="Christoffels A."/>
            <person name="Clutterbuck D.R."/>
            <person name="Crowe M.L."/>
            <person name="Dalla E."/>
            <person name="Dalrymple B.P."/>
            <person name="de Bono B."/>
            <person name="Della Gatta G."/>
            <person name="di Bernardo D."/>
            <person name="Down T."/>
            <person name="Engstrom P."/>
            <person name="Fagiolini M."/>
            <person name="Faulkner G."/>
            <person name="Fletcher C.F."/>
            <person name="Fukushima T."/>
            <person name="Furuno M."/>
            <person name="Futaki S."/>
            <person name="Gariboldi M."/>
            <person name="Georgii-Hemming P."/>
            <person name="Gingeras T.R."/>
            <person name="Gojobori T."/>
            <person name="Green R.E."/>
            <person name="Gustincich S."/>
            <person name="Harbers M."/>
            <person name="Hayashi Y."/>
            <person name="Hensch T.K."/>
            <person name="Hirokawa N."/>
            <person name="Hill D."/>
            <person name="Huminiecki L."/>
            <person name="Iacono M."/>
            <person name="Ikeo K."/>
            <person name="Iwama A."/>
            <person name="Ishikawa T."/>
            <person name="Jakt M."/>
            <person name="Kanapin A."/>
            <person name="Katoh M."/>
            <person name="Kawasawa Y."/>
            <person name="Kelso J."/>
            <person name="Kitamura H."/>
            <person name="Kitano H."/>
            <person name="Kollias G."/>
            <person name="Krishnan S.P."/>
            <person name="Kruger A."/>
            <person name="Kummerfeld S.K."/>
            <person name="Kurochkin I.V."/>
            <person name="Lareau L.F."/>
            <person name="Lazarevic D."/>
            <person name="Lipovich L."/>
            <person name="Liu J."/>
            <person name="Liuni S."/>
            <person name="McWilliam S."/>
            <person name="Madan Babu M."/>
            <person name="Madera M."/>
            <person name="Marchionni L."/>
            <person name="Matsuda H."/>
            <person name="Matsuzawa S."/>
            <person name="Miki H."/>
            <person name="Mignone F."/>
            <person name="Miyake S."/>
            <person name="Morris K."/>
            <person name="Mottagui-Tabar S."/>
            <person name="Mulder N."/>
            <person name="Nakano N."/>
            <person name="Nakauchi H."/>
            <person name="Ng P."/>
            <person name="Nilsson R."/>
            <person name="Nishiguchi S."/>
            <person name="Nishikawa S."/>
            <person name="Nori F."/>
            <person name="Ohara O."/>
            <person name="Okazaki Y."/>
            <person name="Orlando V."/>
            <person name="Pang K.C."/>
            <person name="Pavan W.J."/>
            <person name="Pavesi G."/>
            <person name="Pesole G."/>
            <person name="Petrovsky N."/>
            <person name="Piazza S."/>
            <person name="Reed J."/>
            <person name="Reid J.F."/>
            <person name="Ring B.Z."/>
            <person name="Ringwald M."/>
            <person name="Rost B."/>
            <person name="Ruan Y."/>
            <person name="Salzberg S.L."/>
            <person name="Sandelin A."/>
            <person name="Schneider C."/>
            <person name="Schoenbach C."/>
            <person name="Sekiguchi K."/>
            <person name="Semple C.A."/>
            <person name="Seno S."/>
            <person name="Sessa L."/>
            <person name="Sheng Y."/>
            <person name="Shibata Y."/>
            <person name="Shimada H."/>
            <person name="Shimada K."/>
            <person name="Silva D."/>
            <person name="Sinclair B."/>
            <person name="Sperling S."/>
            <person name="Stupka E."/>
            <person name="Sugiura K."/>
            <person name="Sultana R."/>
            <person name="Takenaka Y."/>
            <person name="Taki K."/>
            <person name="Tammoja K."/>
            <person name="Tan S.L."/>
            <person name="Tang S."/>
            <person name="Taylor M.S."/>
            <person name="Tegner J."/>
            <person name="Teichmann S.A."/>
            <person name="Ueda H.R."/>
            <person name="van Nimwegen E."/>
            <person name="Verardo R."/>
            <person name="Wei C.L."/>
            <person name="Yagi K."/>
            <person name="Yamanishi H."/>
            <person name="Zabarovsky E."/>
            <person name="Zhu S."/>
            <person name="Zimmer A."/>
            <person name="Hide W."/>
            <person name="Bult C."/>
            <person name="Grimmond S.M."/>
            <person name="Teasdale R.D."/>
            <person name="Liu E.T."/>
            <person name="Brusic V."/>
            <person name="Quackenbush J."/>
            <person name="Wahlestedt C."/>
            <person name="Mattick J.S."/>
            <person name="Hume D.A."/>
            <person name="Kai C."/>
            <person name="Sasaki D."/>
            <person name="Tomaru Y."/>
            <person name="Fukuda S."/>
            <person name="Kanamori-Katayama M."/>
            <person name="Suzuki M."/>
            <person name="Aoki J."/>
            <person name="Arakawa T."/>
            <person name="Iida J."/>
            <person name="Imamura K."/>
            <person name="Itoh M."/>
            <person name="Kato T."/>
            <person name="Kawaji H."/>
            <person name="Kawagashira N."/>
            <person name="Kawashima T."/>
            <person name="Kojima M."/>
            <person name="Kondo S."/>
            <person name="Konno H."/>
            <person name="Nakano K."/>
            <person name="Ninomiya N."/>
            <person name="Nishio T."/>
            <person name="Okada M."/>
            <person name="Plessy C."/>
            <person name="Shibata K."/>
            <person name="Shiraki T."/>
            <person name="Suzuki S."/>
            <person name="Tagami M."/>
            <person name="Waki K."/>
            <person name="Watahiki A."/>
            <person name="Okamura-Oho Y."/>
            <person name="Suzuki H."/>
            <person name="Kawai J."/>
            <person name="Hayashizaki Y."/>
        </authorList>
    </citation>
    <scope>NUCLEOTIDE SEQUENCE [LARGE SCALE MRNA]</scope>
    <source>
        <strain>C57BL/6J</strain>
        <tissue>Embryo</tissue>
        <tissue>Thymus</tissue>
    </source>
</reference>
<reference key="2">
    <citation type="journal article" date="2004" name="Genome Res.">
        <title>The status, quality, and expansion of the NIH full-length cDNA project: the Mammalian Gene Collection (MGC).</title>
        <authorList>
            <consortium name="The MGC Project Team"/>
        </authorList>
    </citation>
    <scope>NUCLEOTIDE SEQUENCE [LARGE SCALE MRNA]</scope>
    <source>
        <strain>FVB/N</strain>
        <tissue>Salivary gland</tissue>
    </source>
</reference>
<reference key="3">
    <citation type="journal article" date="2003" name="J. Mol. Biol.">
        <title>Tipin, a novel timeless-interacting protein, is developmentally co-expressed with timeless and disrupts its self-association.</title>
        <authorList>
            <person name="Gotter A.L."/>
        </authorList>
    </citation>
    <scope>IDENTIFICATION</scope>
    <scope>INTERACTION WITH TIMELESS</scope>
    <scope>TISSUE SPECIFICITY</scope>
    <scope>DEVELOPMENTAL STAGE</scope>
    <scope>SUBCELLULAR LOCATION</scope>
</reference>
<reference key="4">
    <citation type="journal article" date="2007" name="J. Mol. Biol.">
        <title>Mammalian TIMELESS and Tipin are evolutionarily conserved replication fork-associated factors.</title>
        <authorList>
            <person name="Gotter A.L."/>
            <person name="Suppa C."/>
            <person name="Emanuel B.S."/>
        </authorList>
    </citation>
    <scope>INTERACTION WITH RPA2 AND PRDX2</scope>
    <scope>FUNCTION</scope>
</reference>
<comment type="function">
    <text evidence="5">Plays an important role in the control of DNA replication and the maintenance of replication fork stability. Important for cell survival after DNA damage or replication stress. May be specifically required for the ATR-CHEK1 pathway in the replication checkpoint induced by hydroxyurea or ultraviolet light. Forms a complex with TIMELESS and this complex regulates DNA replication processes under both normal and stress conditions, stabilizes replication forks and influences both CHEK1 phosphorylation and the intra-S phase checkpoint in response to genotoxic stress.</text>
</comment>
<comment type="subunit">
    <text evidence="1 4 5">Interacts with MCM6 and MCM7 (By similarity). Interacts with TIMELESS (via N-terminus), which impairs TIMELESS self-association. Interacts with RPA2 and PRDX2.</text>
</comment>
<comment type="subcellular location">
    <subcellularLocation>
        <location evidence="4">Cytoplasm</location>
    </subcellularLocation>
    <subcellularLocation>
        <location evidence="4">Nucleus</location>
    </subcellularLocation>
</comment>
<comment type="tissue specificity">
    <text evidence="4">Expressed in brain.</text>
</comment>
<comment type="developmental stage">
    <text evidence="4">Expression peaks between 11 dpc and 15 dpc. At 7.5 dpc, expressed in germ cell layers. At 14.5 dpc, expressed at highest levels in thymus, liver, gastrointestinal tract, lung and the rapidly proliferating ventricular zone of the brain.</text>
</comment>
<comment type="similarity">
    <text evidence="6">Belongs to the CSM3 family.</text>
</comment>
<evidence type="ECO:0000250" key="1"/>
<evidence type="ECO:0000250" key="2">
    <source>
        <dbReference type="UniProtKB" id="Q9BVW5"/>
    </source>
</evidence>
<evidence type="ECO:0000256" key="3">
    <source>
        <dbReference type="SAM" id="MobiDB-lite"/>
    </source>
</evidence>
<evidence type="ECO:0000269" key="4">
    <source>
    </source>
</evidence>
<evidence type="ECO:0000269" key="5">
    <source>
    </source>
</evidence>
<evidence type="ECO:0000305" key="6"/>
<dbReference type="EMBL" id="AK003451">
    <property type="protein sequence ID" value="BAB22798.1"/>
    <property type="molecule type" value="mRNA"/>
</dbReference>
<dbReference type="EMBL" id="AK003802">
    <property type="protein sequence ID" value="BAB23004.1"/>
    <property type="molecule type" value="mRNA"/>
</dbReference>
<dbReference type="EMBL" id="AK011357">
    <property type="protein sequence ID" value="BAB27565.1"/>
    <property type="molecule type" value="mRNA"/>
</dbReference>
<dbReference type="EMBL" id="AK038111">
    <property type="protein sequence ID" value="BAC29931.1"/>
    <property type="molecule type" value="mRNA"/>
</dbReference>
<dbReference type="EMBL" id="BC016211">
    <property type="protein sequence ID" value="AAH16211.1"/>
    <property type="molecule type" value="mRNA"/>
</dbReference>
<dbReference type="EMBL" id="BK001385">
    <property type="protein sequence ID" value="DAA01364.1"/>
    <property type="molecule type" value="mRNA"/>
</dbReference>
<dbReference type="CCDS" id="CCDS23279.1"/>
<dbReference type="RefSeq" id="NP_001311485.1">
    <property type="nucleotide sequence ID" value="NM_001324556.2"/>
</dbReference>
<dbReference type="RefSeq" id="NP_001311486.1">
    <property type="nucleotide sequence ID" value="NM_001324557.2"/>
</dbReference>
<dbReference type="RefSeq" id="NP_001311487.1">
    <property type="nucleotide sequence ID" value="NM_001324558.2"/>
</dbReference>
<dbReference type="RefSeq" id="NP_079648.1">
    <property type="nucleotide sequence ID" value="NM_025372.5"/>
</dbReference>
<dbReference type="RefSeq" id="XP_006511403.1">
    <property type="nucleotide sequence ID" value="XM_006511340.4"/>
</dbReference>
<dbReference type="EMDB" id="EMD-2789"/>
<dbReference type="SMR" id="Q91WA1"/>
<dbReference type="BioGRID" id="211238">
    <property type="interactions" value="31"/>
</dbReference>
<dbReference type="FunCoup" id="Q91WA1">
    <property type="interactions" value="3456"/>
</dbReference>
<dbReference type="IntAct" id="Q91WA1">
    <property type="interactions" value="28"/>
</dbReference>
<dbReference type="STRING" id="10090.ENSMUSP00000149833"/>
<dbReference type="iPTMnet" id="Q91WA1"/>
<dbReference type="PhosphoSitePlus" id="Q91WA1"/>
<dbReference type="PaxDb" id="10090-ENSMUSP00000034964"/>
<dbReference type="PeptideAtlas" id="Q91WA1"/>
<dbReference type="ProteomicsDB" id="259454"/>
<dbReference type="Pumba" id="Q91WA1"/>
<dbReference type="Antibodypedia" id="26122">
    <property type="antibodies" value="376 antibodies from 25 providers"/>
</dbReference>
<dbReference type="DNASU" id="66131"/>
<dbReference type="Ensembl" id="ENSMUST00000034964.7">
    <property type="protein sequence ID" value="ENSMUSP00000034964.7"/>
    <property type="gene ID" value="ENSMUSG00000032397.8"/>
</dbReference>
<dbReference type="Ensembl" id="ENSMUST00000216594.2">
    <property type="protein sequence ID" value="ENSMUSP00000149833.2"/>
    <property type="gene ID" value="ENSMUSG00000032397.8"/>
</dbReference>
<dbReference type="GeneID" id="66131"/>
<dbReference type="KEGG" id="mmu:66131"/>
<dbReference type="UCSC" id="uc009qbr.1">
    <property type="organism name" value="mouse"/>
</dbReference>
<dbReference type="AGR" id="MGI:1921571"/>
<dbReference type="CTD" id="54962"/>
<dbReference type="MGI" id="MGI:1921571">
    <property type="gene designation" value="Tipin"/>
</dbReference>
<dbReference type="VEuPathDB" id="HostDB:ENSMUSG00000032397"/>
<dbReference type="eggNOG" id="KOG3004">
    <property type="taxonomic scope" value="Eukaryota"/>
</dbReference>
<dbReference type="GeneTree" id="ENSGT00390000005764"/>
<dbReference type="HOGENOM" id="CLU_074595_0_0_1"/>
<dbReference type="InParanoid" id="Q91WA1"/>
<dbReference type="OMA" id="IIHEDFI"/>
<dbReference type="OrthoDB" id="437078at2759"/>
<dbReference type="PhylomeDB" id="Q91WA1"/>
<dbReference type="TreeFam" id="TF313290"/>
<dbReference type="Reactome" id="R-MMU-5693607">
    <property type="pathway name" value="Processing of DNA double-strand break ends"/>
</dbReference>
<dbReference type="BioGRID-ORCS" id="66131">
    <property type="hits" value="17 hits in 79 CRISPR screens"/>
</dbReference>
<dbReference type="ChiTaRS" id="Tipin">
    <property type="organism name" value="mouse"/>
</dbReference>
<dbReference type="PRO" id="PR:Q91WA1"/>
<dbReference type="Proteomes" id="UP000000589">
    <property type="component" value="Chromosome 9"/>
</dbReference>
<dbReference type="RNAct" id="Q91WA1">
    <property type="molecule type" value="protein"/>
</dbReference>
<dbReference type="Bgee" id="ENSMUSG00000032397">
    <property type="expression patterns" value="Expressed in fetal liver hematopoietic progenitor cell and 261 other cell types or tissues"/>
</dbReference>
<dbReference type="ExpressionAtlas" id="Q91WA1">
    <property type="expression patterns" value="baseline and differential"/>
</dbReference>
<dbReference type="GO" id="GO:0000785">
    <property type="term" value="C:chromatin"/>
    <property type="evidence" value="ECO:0000250"/>
    <property type="project" value="UniProtKB"/>
</dbReference>
<dbReference type="GO" id="GO:0005737">
    <property type="term" value="C:cytoplasm"/>
    <property type="evidence" value="ECO:0000314"/>
    <property type="project" value="MGI"/>
</dbReference>
<dbReference type="GO" id="GO:0005634">
    <property type="term" value="C:nucleus"/>
    <property type="evidence" value="ECO:0000314"/>
    <property type="project" value="MGI"/>
</dbReference>
<dbReference type="GO" id="GO:0044770">
    <property type="term" value="P:cell cycle phase transition"/>
    <property type="evidence" value="ECO:0000250"/>
    <property type="project" value="UniProtKB"/>
</dbReference>
<dbReference type="GO" id="GO:0051301">
    <property type="term" value="P:cell division"/>
    <property type="evidence" value="ECO:0007669"/>
    <property type="project" value="UniProtKB-KW"/>
</dbReference>
<dbReference type="GO" id="GO:0000077">
    <property type="term" value="P:DNA damage checkpoint signaling"/>
    <property type="evidence" value="ECO:0000315"/>
    <property type="project" value="MGI"/>
</dbReference>
<dbReference type="GO" id="GO:0000076">
    <property type="term" value="P:DNA replication checkpoint signaling"/>
    <property type="evidence" value="ECO:0000250"/>
    <property type="project" value="UniProtKB"/>
</dbReference>
<dbReference type="GO" id="GO:0031573">
    <property type="term" value="P:mitotic intra-S DNA damage checkpoint signaling"/>
    <property type="evidence" value="ECO:0000250"/>
    <property type="project" value="UniProtKB"/>
</dbReference>
<dbReference type="GO" id="GO:0008284">
    <property type="term" value="P:positive regulation of cell population proliferation"/>
    <property type="evidence" value="ECO:0000250"/>
    <property type="project" value="UniProtKB"/>
</dbReference>
<dbReference type="GO" id="GO:0031297">
    <property type="term" value="P:replication fork processing"/>
    <property type="evidence" value="ECO:0007669"/>
    <property type="project" value="InterPro"/>
</dbReference>
<dbReference type="GO" id="GO:0009411">
    <property type="term" value="P:response to UV"/>
    <property type="evidence" value="ECO:0000315"/>
    <property type="project" value="MGI"/>
</dbReference>
<dbReference type="InterPro" id="IPR012923">
    <property type="entry name" value="Csm3"/>
</dbReference>
<dbReference type="InterPro" id="IPR040038">
    <property type="entry name" value="TIPIN/Csm3/Swi3"/>
</dbReference>
<dbReference type="PANTHER" id="PTHR13220">
    <property type="entry name" value="TIMELESS INTERACTING-RELATED"/>
    <property type="match status" value="1"/>
</dbReference>
<dbReference type="PANTHER" id="PTHR13220:SF11">
    <property type="entry name" value="TIMELESS-INTERACTING PROTEIN"/>
    <property type="match status" value="1"/>
</dbReference>
<dbReference type="Pfam" id="PF07962">
    <property type="entry name" value="Swi3"/>
    <property type="match status" value="1"/>
</dbReference>
<name>TIPIN_MOUSE</name>
<proteinExistence type="evidence at protein level"/>
<organism>
    <name type="scientific">Mus musculus</name>
    <name type="common">Mouse</name>
    <dbReference type="NCBI Taxonomy" id="10090"/>
    <lineage>
        <taxon>Eukaryota</taxon>
        <taxon>Metazoa</taxon>
        <taxon>Chordata</taxon>
        <taxon>Craniata</taxon>
        <taxon>Vertebrata</taxon>
        <taxon>Euteleostomi</taxon>
        <taxon>Mammalia</taxon>
        <taxon>Eutheria</taxon>
        <taxon>Euarchontoglires</taxon>
        <taxon>Glires</taxon>
        <taxon>Rodentia</taxon>
        <taxon>Myomorpha</taxon>
        <taxon>Muroidea</taxon>
        <taxon>Muridae</taxon>
        <taxon>Murinae</taxon>
        <taxon>Mus</taxon>
        <taxon>Mus</taxon>
    </lineage>
</organism>
<accession>Q91WA1</accession>
<accession>Q9CQM3</accession>
<accession>Q9D1J4</accession>
<protein>
    <recommendedName>
        <fullName>TIMELESS-interacting protein</fullName>
    </recommendedName>
</protein>
<gene>
    <name type="primary">Tipin</name>
</gene>
<sequence>MLEQEENGLFEIPDYEHVEDETFPPFPPPASPERDPADAEPEEGSGSGVPVPPKRTVKRNLPKLDATRLTSERGLPALRHVFDKTKFKGKGHEAEDLKTLIRHMEHWAHRLFPKLQFEDFIDRVENLGNKKEVQTCLKRIRLDLPIVHEDFVNNNDEVGEANGPDVSATGFDPFLTSSSDSRKFASEPTRSLTEEQQQRIERNKQLALERRQAKLLSNSQSLENDVTVEENSTGEDQEESNGLNIDTADGPHDVPFASTHEEEQCKAEETQLDHTNLD</sequence>